<protein>
    <recommendedName>
        <fullName>DnaJ homolog subfamily C member 5B</fullName>
    </recommendedName>
    <alternativeName>
        <fullName>Cysteine string protein beta</fullName>
        <shortName>CSP-beta</shortName>
    </alternativeName>
</protein>
<sequence length="199" mass="22505">MACNITNQRQQTLSTSGEALYEILGLQKGASNEDIKKTYRKLALKHHPDKNPDDPAAADKFKEINNAHTILTDMSKRNIYDKYGSLGLYVAEQFGDENVNTYFMLSSWWAKTLFVIIGLLTGCYFCCCLCCCCNCCCGRCRPKSSAPEEDFYVSPEDLEEQIKTDMEKDVDFPVVLQPTNANEKTQLIREGPRSYCTDS</sequence>
<comment type="subunit">
    <text evidence="1">Interacts with the chaperone complex consisting of HSC70 and SGTA.</text>
</comment>
<comment type="subcellular location">
    <subcellularLocation>
        <location evidence="1">Membrane</location>
        <topology>Lipid-anchor</topology>
    </subcellularLocation>
</comment>
<comment type="PTM">
    <text evidence="1">Palmitoylated.</text>
</comment>
<dbReference type="EMBL" id="GL192478">
    <property type="protein sequence ID" value="EFB14338.1"/>
    <property type="molecule type" value="Genomic_DNA"/>
</dbReference>
<dbReference type="RefSeq" id="XP_011219503.1">
    <property type="nucleotide sequence ID" value="XM_011221201.3"/>
</dbReference>
<dbReference type="SMR" id="D2H417"/>
<dbReference type="STRING" id="9646.ENSAMEP00000012979"/>
<dbReference type="Ensembl" id="ENSAMET00000026864.1">
    <property type="protein sequence ID" value="ENSAMEP00000029703.1"/>
    <property type="gene ID" value="ENSAMEG00000012328.2"/>
</dbReference>
<dbReference type="GeneID" id="100473685"/>
<dbReference type="KEGG" id="aml:100473685"/>
<dbReference type="CTD" id="85479"/>
<dbReference type="eggNOG" id="KOG0716">
    <property type="taxonomic scope" value="Eukaryota"/>
</dbReference>
<dbReference type="GeneTree" id="ENSGT00940000159294"/>
<dbReference type="HOGENOM" id="CLU_017633_14_1_1"/>
<dbReference type="InParanoid" id="D2H417"/>
<dbReference type="OMA" id="EINKAHT"/>
<dbReference type="OrthoDB" id="445556at2759"/>
<dbReference type="TreeFam" id="TF105164"/>
<dbReference type="Proteomes" id="UP000008912">
    <property type="component" value="Unassembled WGS sequence"/>
</dbReference>
<dbReference type="GO" id="GO:0005737">
    <property type="term" value="C:cytoplasm"/>
    <property type="evidence" value="ECO:0007669"/>
    <property type="project" value="UniProtKB-ARBA"/>
</dbReference>
<dbReference type="GO" id="GO:0016020">
    <property type="term" value="C:membrane"/>
    <property type="evidence" value="ECO:0007669"/>
    <property type="project" value="UniProtKB-SubCell"/>
</dbReference>
<dbReference type="CDD" id="cd06257">
    <property type="entry name" value="DnaJ"/>
    <property type="match status" value="1"/>
</dbReference>
<dbReference type="FunFam" id="1.10.287.110:FF:000017">
    <property type="entry name" value="dnaJ homolog subfamily C member 5"/>
    <property type="match status" value="1"/>
</dbReference>
<dbReference type="Gene3D" id="1.10.287.110">
    <property type="entry name" value="DnaJ domain"/>
    <property type="match status" value="1"/>
</dbReference>
<dbReference type="InterPro" id="IPR051434">
    <property type="entry name" value="DnaJ_C_subfamily_member5"/>
</dbReference>
<dbReference type="InterPro" id="IPR001623">
    <property type="entry name" value="DnaJ_domain"/>
</dbReference>
<dbReference type="InterPro" id="IPR036869">
    <property type="entry name" value="J_dom_sf"/>
</dbReference>
<dbReference type="PANTHER" id="PTHR44027">
    <property type="entry name" value="DNAJ HOMOLOG SUBFAMILY C MEMBER 5 HOMOLOG"/>
    <property type="match status" value="1"/>
</dbReference>
<dbReference type="PANTHER" id="PTHR44027:SF6">
    <property type="entry name" value="DNAJ HOMOLOG SUBFAMILY C MEMBER 5B"/>
    <property type="match status" value="1"/>
</dbReference>
<dbReference type="Pfam" id="PF00226">
    <property type="entry name" value="DnaJ"/>
    <property type="match status" value="1"/>
</dbReference>
<dbReference type="PRINTS" id="PR00625">
    <property type="entry name" value="JDOMAIN"/>
</dbReference>
<dbReference type="SMART" id="SM00271">
    <property type="entry name" value="DnaJ"/>
    <property type="match status" value="1"/>
</dbReference>
<dbReference type="SUPFAM" id="SSF46565">
    <property type="entry name" value="Chaperone J-domain"/>
    <property type="match status" value="1"/>
</dbReference>
<dbReference type="PROSITE" id="PS50076">
    <property type="entry name" value="DNAJ_2"/>
    <property type="match status" value="1"/>
</dbReference>
<accession>D2H417</accession>
<name>DNJ5B_AILME</name>
<reference key="1">
    <citation type="journal article" date="2010" name="Nature">
        <title>The sequence and de novo assembly of the giant panda genome.</title>
        <authorList>
            <person name="Li R."/>
            <person name="Fan W."/>
            <person name="Tian G."/>
            <person name="Zhu H."/>
            <person name="He L."/>
            <person name="Cai J."/>
            <person name="Huang Q."/>
            <person name="Cai Q."/>
            <person name="Li B."/>
            <person name="Bai Y."/>
            <person name="Zhang Z."/>
            <person name="Zhang Y."/>
            <person name="Wang W."/>
            <person name="Li J."/>
            <person name="Wei F."/>
            <person name="Li H."/>
            <person name="Jian M."/>
            <person name="Li J."/>
            <person name="Zhang Z."/>
            <person name="Nielsen R."/>
            <person name="Li D."/>
            <person name="Gu W."/>
            <person name="Yang Z."/>
            <person name="Xuan Z."/>
            <person name="Ryder O.A."/>
            <person name="Leung F.C."/>
            <person name="Zhou Y."/>
            <person name="Cao J."/>
            <person name="Sun X."/>
            <person name="Fu Y."/>
            <person name="Fang X."/>
            <person name="Guo X."/>
            <person name="Wang B."/>
            <person name="Hou R."/>
            <person name="Shen F."/>
            <person name="Mu B."/>
            <person name="Ni P."/>
            <person name="Lin R."/>
            <person name="Qian W."/>
            <person name="Wang G."/>
            <person name="Yu C."/>
            <person name="Nie W."/>
            <person name="Wang J."/>
            <person name="Wu Z."/>
            <person name="Liang H."/>
            <person name="Min J."/>
            <person name="Wu Q."/>
            <person name="Cheng S."/>
            <person name="Ruan J."/>
            <person name="Wang M."/>
            <person name="Shi Z."/>
            <person name="Wen M."/>
            <person name="Liu B."/>
            <person name="Ren X."/>
            <person name="Zheng H."/>
            <person name="Dong D."/>
            <person name="Cook K."/>
            <person name="Shan G."/>
            <person name="Zhang H."/>
            <person name="Kosiol C."/>
            <person name="Xie X."/>
            <person name="Lu Z."/>
            <person name="Zheng H."/>
            <person name="Li Y."/>
            <person name="Steiner C.C."/>
            <person name="Lam T.T."/>
            <person name="Lin S."/>
            <person name="Zhang Q."/>
            <person name="Li G."/>
            <person name="Tian J."/>
            <person name="Gong T."/>
            <person name="Liu H."/>
            <person name="Zhang D."/>
            <person name="Fang L."/>
            <person name="Ye C."/>
            <person name="Zhang J."/>
            <person name="Hu W."/>
            <person name="Xu A."/>
            <person name="Ren Y."/>
            <person name="Zhang G."/>
            <person name="Bruford M.W."/>
            <person name="Li Q."/>
            <person name="Ma L."/>
            <person name="Guo Y."/>
            <person name="An N."/>
            <person name="Hu Y."/>
            <person name="Zheng Y."/>
            <person name="Shi Y."/>
            <person name="Li Z."/>
            <person name="Liu Q."/>
            <person name="Chen Y."/>
            <person name="Zhao J."/>
            <person name="Qu N."/>
            <person name="Zhao S."/>
            <person name="Tian F."/>
            <person name="Wang X."/>
            <person name="Wang H."/>
            <person name="Xu L."/>
            <person name="Liu X."/>
            <person name="Vinar T."/>
            <person name="Wang Y."/>
            <person name="Lam T.W."/>
            <person name="Yiu S.M."/>
            <person name="Liu S."/>
            <person name="Zhang H."/>
            <person name="Li D."/>
            <person name="Huang Y."/>
            <person name="Wang X."/>
            <person name="Yang G."/>
            <person name="Jiang Z."/>
            <person name="Wang J."/>
            <person name="Qin N."/>
            <person name="Li L."/>
            <person name="Li J."/>
            <person name="Bolund L."/>
            <person name="Kristiansen K."/>
            <person name="Wong G.K."/>
            <person name="Olson M."/>
            <person name="Zhang X."/>
            <person name="Li S."/>
            <person name="Yang H."/>
            <person name="Wang J."/>
            <person name="Wang J."/>
        </authorList>
    </citation>
    <scope>NUCLEOTIDE SEQUENCE [LARGE SCALE GENOMIC DNA]</scope>
</reference>
<feature type="chain" id="PRO_0000412569" description="DnaJ homolog subfamily C member 5B">
    <location>
        <begin position="1"/>
        <end position="199"/>
    </location>
</feature>
<feature type="domain" description="J" evidence="3">
    <location>
        <begin position="19"/>
        <end position="84"/>
    </location>
</feature>
<feature type="modified residue" description="Phosphoserine" evidence="2">
    <location>
        <position position="14"/>
    </location>
</feature>
<feature type="modified residue" description="Phosphoserine" evidence="2">
    <location>
        <position position="16"/>
    </location>
</feature>
<proteinExistence type="inferred from homology"/>
<keyword id="KW-0143">Chaperone</keyword>
<keyword id="KW-0449">Lipoprotein</keyword>
<keyword id="KW-0472">Membrane</keyword>
<keyword id="KW-0564">Palmitate</keyword>
<keyword id="KW-0597">Phosphoprotein</keyword>
<keyword id="KW-1185">Reference proteome</keyword>
<organism>
    <name type="scientific">Ailuropoda melanoleuca</name>
    <name type="common">Giant panda</name>
    <dbReference type="NCBI Taxonomy" id="9646"/>
    <lineage>
        <taxon>Eukaryota</taxon>
        <taxon>Metazoa</taxon>
        <taxon>Chordata</taxon>
        <taxon>Craniata</taxon>
        <taxon>Vertebrata</taxon>
        <taxon>Euteleostomi</taxon>
        <taxon>Mammalia</taxon>
        <taxon>Eutheria</taxon>
        <taxon>Laurasiatheria</taxon>
        <taxon>Carnivora</taxon>
        <taxon>Caniformia</taxon>
        <taxon>Ursidae</taxon>
        <taxon>Ailuropoda</taxon>
    </lineage>
</organism>
<evidence type="ECO:0000250" key="1"/>
<evidence type="ECO:0000250" key="2">
    <source>
        <dbReference type="UniProtKB" id="D3ZD82"/>
    </source>
</evidence>
<evidence type="ECO:0000255" key="3">
    <source>
        <dbReference type="PROSITE-ProRule" id="PRU00286"/>
    </source>
</evidence>
<gene>
    <name type="primary">DNAJC5B</name>
</gene>